<proteinExistence type="inferred from homology"/>
<accession>B2V7U3</accession>
<gene>
    <name evidence="1" type="primary">lpxA</name>
    <name type="ordered locus">SYO3AOP1_0372</name>
</gene>
<protein>
    <recommendedName>
        <fullName evidence="1">Acyl-[acyl-carrier-protein]--UDP-N-acetylglucosamine O-acyltransferase</fullName>
        <shortName evidence="1">UDP-N-acetylglucosamine acyltransferase</shortName>
        <ecNumber evidence="1">2.3.1.129</ecNumber>
    </recommendedName>
</protein>
<organism>
    <name type="scientific">Sulfurihydrogenibium sp. (strain YO3AOP1)</name>
    <dbReference type="NCBI Taxonomy" id="436114"/>
    <lineage>
        <taxon>Bacteria</taxon>
        <taxon>Pseudomonadati</taxon>
        <taxon>Aquificota</taxon>
        <taxon>Aquificia</taxon>
        <taxon>Aquificales</taxon>
        <taxon>Hydrogenothermaceae</taxon>
        <taxon>Sulfurihydrogenibium</taxon>
    </lineage>
</organism>
<comment type="function">
    <text evidence="1">Involved in the biosynthesis of lipid A, a phosphorylated glycolipid that anchors the lipopolysaccharide to the outer membrane of the cell.</text>
</comment>
<comment type="catalytic activity">
    <reaction evidence="1">
        <text>a (3R)-hydroxyacyl-[ACP] + UDP-N-acetyl-alpha-D-glucosamine = a UDP-3-O-[(3R)-3-hydroxyacyl]-N-acetyl-alpha-D-glucosamine + holo-[ACP]</text>
        <dbReference type="Rhea" id="RHEA:67812"/>
        <dbReference type="Rhea" id="RHEA-COMP:9685"/>
        <dbReference type="Rhea" id="RHEA-COMP:9945"/>
        <dbReference type="ChEBI" id="CHEBI:57705"/>
        <dbReference type="ChEBI" id="CHEBI:64479"/>
        <dbReference type="ChEBI" id="CHEBI:78827"/>
        <dbReference type="ChEBI" id="CHEBI:173225"/>
        <dbReference type="EC" id="2.3.1.129"/>
    </reaction>
</comment>
<comment type="pathway">
    <text evidence="1">Glycolipid biosynthesis; lipid IV(A) biosynthesis; lipid IV(A) from (3R)-3-hydroxytetradecanoyl-[acyl-carrier-protein] and UDP-N-acetyl-alpha-D-glucosamine: step 1/6.</text>
</comment>
<comment type="subunit">
    <text evidence="1">Homotrimer.</text>
</comment>
<comment type="subcellular location">
    <subcellularLocation>
        <location evidence="1">Cytoplasm</location>
    </subcellularLocation>
</comment>
<comment type="similarity">
    <text evidence="1">Belongs to the transferase hexapeptide repeat family. LpxA subfamily.</text>
</comment>
<feature type="chain" id="PRO_1000190864" description="Acyl-[acyl-carrier-protein]--UDP-N-acetylglucosamine O-acyltransferase">
    <location>
        <begin position="1"/>
        <end position="271"/>
    </location>
</feature>
<keyword id="KW-0012">Acyltransferase</keyword>
<keyword id="KW-0963">Cytoplasm</keyword>
<keyword id="KW-0441">Lipid A biosynthesis</keyword>
<keyword id="KW-0444">Lipid biosynthesis</keyword>
<keyword id="KW-0443">Lipid metabolism</keyword>
<keyword id="KW-0677">Repeat</keyword>
<keyword id="KW-0808">Transferase</keyword>
<reference key="1">
    <citation type="journal article" date="2009" name="J. Bacteriol.">
        <title>Complete and draft genome sequences of six members of the Aquificales.</title>
        <authorList>
            <person name="Reysenbach A.-L."/>
            <person name="Hamamura N."/>
            <person name="Podar M."/>
            <person name="Griffiths E."/>
            <person name="Ferreira S."/>
            <person name="Hochstein R."/>
            <person name="Heidelberg J."/>
            <person name="Johnson J."/>
            <person name="Mead D."/>
            <person name="Pohorille A."/>
            <person name="Sarmiento M."/>
            <person name="Schweighofer K."/>
            <person name="Seshadri R."/>
            <person name="Voytek M.A."/>
        </authorList>
    </citation>
    <scope>NUCLEOTIDE SEQUENCE [LARGE SCALE GENOMIC DNA]</scope>
    <source>
        <strain>YO3AOP1</strain>
    </source>
</reference>
<name>LPXA_SULSY</name>
<evidence type="ECO:0000255" key="1">
    <source>
        <dbReference type="HAMAP-Rule" id="MF_00387"/>
    </source>
</evidence>
<dbReference type="EC" id="2.3.1.129" evidence="1"/>
<dbReference type="EMBL" id="CP001080">
    <property type="protein sequence ID" value="ACD66016.1"/>
    <property type="molecule type" value="Genomic_DNA"/>
</dbReference>
<dbReference type="RefSeq" id="WP_012459100.1">
    <property type="nucleotide sequence ID" value="NC_010730.1"/>
</dbReference>
<dbReference type="SMR" id="B2V7U3"/>
<dbReference type="STRING" id="436114.SYO3AOP1_0372"/>
<dbReference type="KEGG" id="sul:SYO3AOP1_0372"/>
<dbReference type="eggNOG" id="COG1043">
    <property type="taxonomic scope" value="Bacteria"/>
</dbReference>
<dbReference type="HOGENOM" id="CLU_061249_0_0_0"/>
<dbReference type="UniPathway" id="UPA00359">
    <property type="reaction ID" value="UER00477"/>
</dbReference>
<dbReference type="GO" id="GO:0005737">
    <property type="term" value="C:cytoplasm"/>
    <property type="evidence" value="ECO:0007669"/>
    <property type="project" value="UniProtKB-SubCell"/>
</dbReference>
<dbReference type="GO" id="GO:0016020">
    <property type="term" value="C:membrane"/>
    <property type="evidence" value="ECO:0007669"/>
    <property type="project" value="GOC"/>
</dbReference>
<dbReference type="GO" id="GO:0008780">
    <property type="term" value="F:acyl-[acyl-carrier-protein]-UDP-N-acetylglucosamine O-acyltransferase activity"/>
    <property type="evidence" value="ECO:0007669"/>
    <property type="project" value="UniProtKB-UniRule"/>
</dbReference>
<dbReference type="GO" id="GO:0009245">
    <property type="term" value="P:lipid A biosynthetic process"/>
    <property type="evidence" value="ECO:0007669"/>
    <property type="project" value="UniProtKB-UniRule"/>
</dbReference>
<dbReference type="CDD" id="cd03351">
    <property type="entry name" value="LbH_UDP-GlcNAc_AT"/>
    <property type="match status" value="1"/>
</dbReference>
<dbReference type="Gene3D" id="2.160.10.10">
    <property type="entry name" value="Hexapeptide repeat proteins"/>
    <property type="match status" value="1"/>
</dbReference>
<dbReference type="Gene3D" id="1.20.1180.10">
    <property type="entry name" value="Udp N-acetylglucosamine O-acyltransferase, C-terminal domain"/>
    <property type="match status" value="1"/>
</dbReference>
<dbReference type="HAMAP" id="MF_00387">
    <property type="entry name" value="LpxA"/>
    <property type="match status" value="1"/>
</dbReference>
<dbReference type="InterPro" id="IPR029098">
    <property type="entry name" value="Acetyltransf_C"/>
</dbReference>
<dbReference type="InterPro" id="IPR037157">
    <property type="entry name" value="Acetyltransf_C_sf"/>
</dbReference>
<dbReference type="InterPro" id="IPR001451">
    <property type="entry name" value="Hexapep"/>
</dbReference>
<dbReference type="InterPro" id="IPR018357">
    <property type="entry name" value="Hexapep_transf_CS"/>
</dbReference>
<dbReference type="InterPro" id="IPR010137">
    <property type="entry name" value="Lipid_A_LpxA"/>
</dbReference>
<dbReference type="InterPro" id="IPR011004">
    <property type="entry name" value="Trimer_LpxA-like_sf"/>
</dbReference>
<dbReference type="NCBIfam" id="TIGR01852">
    <property type="entry name" value="lipid_A_lpxA"/>
    <property type="match status" value="1"/>
</dbReference>
<dbReference type="NCBIfam" id="NF003657">
    <property type="entry name" value="PRK05289.1"/>
    <property type="match status" value="1"/>
</dbReference>
<dbReference type="PANTHER" id="PTHR43480">
    <property type="entry name" value="ACYL-[ACYL-CARRIER-PROTEIN]--UDP-N-ACETYLGLUCOSAMINE O-ACYLTRANSFERASE"/>
    <property type="match status" value="1"/>
</dbReference>
<dbReference type="PANTHER" id="PTHR43480:SF1">
    <property type="entry name" value="ACYL-[ACYL-CARRIER-PROTEIN]--UDP-N-ACETYLGLUCOSAMINE O-ACYLTRANSFERASE, MITOCHONDRIAL-RELATED"/>
    <property type="match status" value="1"/>
</dbReference>
<dbReference type="Pfam" id="PF13720">
    <property type="entry name" value="Acetyltransf_11"/>
    <property type="match status" value="1"/>
</dbReference>
<dbReference type="Pfam" id="PF00132">
    <property type="entry name" value="Hexapep"/>
    <property type="match status" value="2"/>
</dbReference>
<dbReference type="PIRSF" id="PIRSF000456">
    <property type="entry name" value="UDP-GlcNAc_acltr"/>
    <property type="match status" value="1"/>
</dbReference>
<dbReference type="SUPFAM" id="SSF51161">
    <property type="entry name" value="Trimeric LpxA-like enzymes"/>
    <property type="match status" value="1"/>
</dbReference>
<dbReference type="PROSITE" id="PS00101">
    <property type="entry name" value="HEXAPEP_TRANSFERASES"/>
    <property type="match status" value="1"/>
</dbReference>
<sequence>MVEIHPTAIVSNKAKLGTNVKVGPFSIIEDEVEIGDNTVIHSSVKIRNYTKIGSNCEIFEGCVIGNIPQHLGFKGEISYVEIGNNTVLREYCTVHRGTSFDDGITRIGNNTYLMAYVHIAHDCKVGDNTILANCVTLAGHVKIGNYVFVGGLTPIHQFCRIGDYAMVGGASAVDKDIPPFTRASKNHVLLYGLNLVGLKRRGFSSETIKLLKEAYRILFRTSPTLAEGIKEVEEKLPKTKEIQMLLDFVKTTKRGIAPEASKRKLLISDEE</sequence>